<keyword id="KW-0030">Aminoacyl-tRNA synthetase</keyword>
<keyword id="KW-0067">ATP-binding</keyword>
<keyword id="KW-0963">Cytoplasm</keyword>
<keyword id="KW-0436">Ligase</keyword>
<keyword id="KW-0547">Nucleotide-binding</keyword>
<keyword id="KW-0648">Protein biosynthesis</keyword>
<keyword id="KW-1185">Reference proteome</keyword>
<accession>P73201</accession>
<reference key="1">
    <citation type="journal article" date="1996" name="DNA Res.">
        <title>Sequence analysis of the genome of the unicellular cyanobacterium Synechocystis sp. strain PCC6803. II. Sequence determination of the entire genome and assignment of potential protein-coding regions.</title>
        <authorList>
            <person name="Kaneko T."/>
            <person name="Sato S."/>
            <person name="Kotani H."/>
            <person name="Tanaka A."/>
            <person name="Asamizu E."/>
            <person name="Nakamura Y."/>
            <person name="Miyajima N."/>
            <person name="Hirosawa M."/>
            <person name="Sugiura M."/>
            <person name="Sasamoto S."/>
            <person name="Kimura T."/>
            <person name="Hosouchi T."/>
            <person name="Matsuno A."/>
            <person name="Muraki A."/>
            <person name="Nakazaki N."/>
            <person name="Naruo K."/>
            <person name="Okumura S."/>
            <person name="Shimpo S."/>
            <person name="Takeuchi C."/>
            <person name="Wada T."/>
            <person name="Watanabe A."/>
            <person name="Yamada M."/>
            <person name="Yasuda M."/>
            <person name="Tabata S."/>
        </authorList>
    </citation>
    <scope>NUCLEOTIDE SEQUENCE [LARGE SCALE GENOMIC DNA]</scope>
    <source>
        <strain>ATCC 27184 / PCC 6803 / Kazusa</strain>
    </source>
</reference>
<gene>
    <name evidence="1" type="primary">serS</name>
    <name type="ordered locus">slr1703</name>
</gene>
<dbReference type="EC" id="6.1.1.11" evidence="1"/>
<dbReference type="EMBL" id="BA000022">
    <property type="protein sequence ID" value="BAA17227.1"/>
    <property type="molecule type" value="Genomic_DNA"/>
</dbReference>
<dbReference type="PIR" id="S75313">
    <property type="entry name" value="S75313"/>
</dbReference>
<dbReference type="SMR" id="P73201"/>
<dbReference type="FunCoup" id="P73201">
    <property type="interactions" value="469"/>
</dbReference>
<dbReference type="STRING" id="1148.gene:10498090"/>
<dbReference type="PaxDb" id="1148-1652304"/>
<dbReference type="EnsemblBacteria" id="BAA17227">
    <property type="protein sequence ID" value="BAA17227"/>
    <property type="gene ID" value="BAA17227"/>
</dbReference>
<dbReference type="KEGG" id="syn:slr1703"/>
<dbReference type="eggNOG" id="COG0172">
    <property type="taxonomic scope" value="Bacteria"/>
</dbReference>
<dbReference type="InParanoid" id="P73201"/>
<dbReference type="PhylomeDB" id="P73201"/>
<dbReference type="UniPathway" id="UPA00906">
    <property type="reaction ID" value="UER00895"/>
</dbReference>
<dbReference type="Proteomes" id="UP000001425">
    <property type="component" value="Chromosome"/>
</dbReference>
<dbReference type="GO" id="GO:0005737">
    <property type="term" value="C:cytoplasm"/>
    <property type="evidence" value="ECO:0007669"/>
    <property type="project" value="UniProtKB-SubCell"/>
</dbReference>
<dbReference type="GO" id="GO:0005524">
    <property type="term" value="F:ATP binding"/>
    <property type="evidence" value="ECO:0007669"/>
    <property type="project" value="UniProtKB-UniRule"/>
</dbReference>
<dbReference type="GO" id="GO:0004828">
    <property type="term" value="F:serine-tRNA ligase activity"/>
    <property type="evidence" value="ECO:0007669"/>
    <property type="project" value="UniProtKB-UniRule"/>
</dbReference>
<dbReference type="GO" id="GO:0016260">
    <property type="term" value="P:selenocysteine biosynthetic process"/>
    <property type="evidence" value="ECO:0007669"/>
    <property type="project" value="UniProtKB-UniRule"/>
</dbReference>
<dbReference type="GO" id="GO:0006434">
    <property type="term" value="P:seryl-tRNA aminoacylation"/>
    <property type="evidence" value="ECO:0007669"/>
    <property type="project" value="UniProtKB-UniRule"/>
</dbReference>
<dbReference type="CDD" id="cd00770">
    <property type="entry name" value="SerRS_core"/>
    <property type="match status" value="1"/>
</dbReference>
<dbReference type="Gene3D" id="3.30.930.10">
    <property type="entry name" value="Bira Bifunctional Protein, Domain 2"/>
    <property type="match status" value="1"/>
</dbReference>
<dbReference type="Gene3D" id="1.10.287.40">
    <property type="entry name" value="Serine-tRNA synthetase, tRNA binding domain"/>
    <property type="match status" value="1"/>
</dbReference>
<dbReference type="HAMAP" id="MF_00176">
    <property type="entry name" value="Ser_tRNA_synth_type1"/>
    <property type="match status" value="1"/>
</dbReference>
<dbReference type="InterPro" id="IPR002314">
    <property type="entry name" value="aa-tRNA-synt_IIb"/>
</dbReference>
<dbReference type="InterPro" id="IPR006195">
    <property type="entry name" value="aa-tRNA-synth_II"/>
</dbReference>
<dbReference type="InterPro" id="IPR045864">
    <property type="entry name" value="aa-tRNA-synth_II/BPL/LPL"/>
</dbReference>
<dbReference type="InterPro" id="IPR002317">
    <property type="entry name" value="Ser-tRNA-ligase_type_1"/>
</dbReference>
<dbReference type="InterPro" id="IPR015866">
    <property type="entry name" value="Ser-tRNA-synth_1_N"/>
</dbReference>
<dbReference type="InterPro" id="IPR042103">
    <property type="entry name" value="SerRS_1_N_sf"/>
</dbReference>
<dbReference type="InterPro" id="IPR033729">
    <property type="entry name" value="SerRS_core"/>
</dbReference>
<dbReference type="InterPro" id="IPR010978">
    <property type="entry name" value="tRNA-bd_arm"/>
</dbReference>
<dbReference type="NCBIfam" id="TIGR00414">
    <property type="entry name" value="serS"/>
    <property type="match status" value="1"/>
</dbReference>
<dbReference type="PANTHER" id="PTHR43697:SF1">
    <property type="entry name" value="SERINE--TRNA LIGASE"/>
    <property type="match status" value="1"/>
</dbReference>
<dbReference type="PANTHER" id="PTHR43697">
    <property type="entry name" value="SERYL-TRNA SYNTHETASE"/>
    <property type="match status" value="1"/>
</dbReference>
<dbReference type="Pfam" id="PF02403">
    <property type="entry name" value="Seryl_tRNA_N"/>
    <property type="match status" value="1"/>
</dbReference>
<dbReference type="Pfam" id="PF00587">
    <property type="entry name" value="tRNA-synt_2b"/>
    <property type="match status" value="1"/>
</dbReference>
<dbReference type="PIRSF" id="PIRSF001529">
    <property type="entry name" value="Ser-tRNA-synth_IIa"/>
    <property type="match status" value="1"/>
</dbReference>
<dbReference type="PRINTS" id="PR00981">
    <property type="entry name" value="TRNASYNTHSER"/>
</dbReference>
<dbReference type="SUPFAM" id="SSF55681">
    <property type="entry name" value="Class II aaRS and biotin synthetases"/>
    <property type="match status" value="1"/>
</dbReference>
<dbReference type="SUPFAM" id="SSF46589">
    <property type="entry name" value="tRNA-binding arm"/>
    <property type="match status" value="1"/>
</dbReference>
<dbReference type="PROSITE" id="PS50862">
    <property type="entry name" value="AA_TRNA_LIGASE_II"/>
    <property type="match status" value="1"/>
</dbReference>
<name>SYS_SYNY3</name>
<proteinExistence type="inferred from homology"/>
<comment type="function">
    <text evidence="1">Catalyzes the attachment of serine to tRNA(Ser). Is also able to aminoacylate tRNA(Sec) with serine, to form the misacylated tRNA L-seryl-tRNA(Sec), which will be further converted into selenocysteinyl-tRNA(Sec).</text>
</comment>
<comment type="catalytic activity">
    <reaction evidence="1">
        <text>tRNA(Ser) + L-serine + ATP = L-seryl-tRNA(Ser) + AMP + diphosphate + H(+)</text>
        <dbReference type="Rhea" id="RHEA:12292"/>
        <dbReference type="Rhea" id="RHEA-COMP:9669"/>
        <dbReference type="Rhea" id="RHEA-COMP:9703"/>
        <dbReference type="ChEBI" id="CHEBI:15378"/>
        <dbReference type="ChEBI" id="CHEBI:30616"/>
        <dbReference type="ChEBI" id="CHEBI:33019"/>
        <dbReference type="ChEBI" id="CHEBI:33384"/>
        <dbReference type="ChEBI" id="CHEBI:78442"/>
        <dbReference type="ChEBI" id="CHEBI:78533"/>
        <dbReference type="ChEBI" id="CHEBI:456215"/>
        <dbReference type="EC" id="6.1.1.11"/>
    </reaction>
</comment>
<comment type="catalytic activity">
    <reaction evidence="1">
        <text>tRNA(Sec) + L-serine + ATP = L-seryl-tRNA(Sec) + AMP + diphosphate + H(+)</text>
        <dbReference type="Rhea" id="RHEA:42580"/>
        <dbReference type="Rhea" id="RHEA-COMP:9742"/>
        <dbReference type="Rhea" id="RHEA-COMP:10128"/>
        <dbReference type="ChEBI" id="CHEBI:15378"/>
        <dbReference type="ChEBI" id="CHEBI:30616"/>
        <dbReference type="ChEBI" id="CHEBI:33019"/>
        <dbReference type="ChEBI" id="CHEBI:33384"/>
        <dbReference type="ChEBI" id="CHEBI:78442"/>
        <dbReference type="ChEBI" id="CHEBI:78533"/>
        <dbReference type="ChEBI" id="CHEBI:456215"/>
        <dbReference type="EC" id="6.1.1.11"/>
    </reaction>
</comment>
<comment type="pathway">
    <text evidence="1">Aminoacyl-tRNA biosynthesis; selenocysteinyl-tRNA(Sec) biosynthesis; L-seryl-tRNA(Sec) from L-serine and tRNA(Sec): step 1/1.</text>
</comment>
<comment type="subunit">
    <text evidence="1">Homodimer. The tRNA molecule binds across the dimer.</text>
</comment>
<comment type="subcellular location">
    <subcellularLocation>
        <location evidence="1">Cytoplasm</location>
    </subcellularLocation>
</comment>
<comment type="domain">
    <text evidence="1">Consists of two distinct domains, a catalytic core and a N-terminal extension that is involved in tRNA binding.</text>
</comment>
<comment type="similarity">
    <text evidence="1">Belongs to the class-II aminoacyl-tRNA synthetase family. Type-1 seryl-tRNA synthetase subfamily.</text>
</comment>
<evidence type="ECO:0000255" key="1">
    <source>
        <dbReference type="HAMAP-Rule" id="MF_00176"/>
    </source>
</evidence>
<feature type="chain" id="PRO_0000122143" description="Serine--tRNA ligase">
    <location>
        <begin position="1"/>
        <end position="430"/>
    </location>
</feature>
<feature type="binding site" evidence="1">
    <location>
        <begin position="238"/>
        <end position="240"/>
    </location>
    <ligand>
        <name>L-serine</name>
        <dbReference type="ChEBI" id="CHEBI:33384"/>
    </ligand>
</feature>
<feature type="binding site" evidence="1">
    <location>
        <begin position="269"/>
        <end position="271"/>
    </location>
    <ligand>
        <name>ATP</name>
        <dbReference type="ChEBI" id="CHEBI:30616"/>
    </ligand>
</feature>
<feature type="binding site" evidence="1">
    <location>
        <position position="292"/>
    </location>
    <ligand>
        <name>L-serine</name>
        <dbReference type="ChEBI" id="CHEBI:33384"/>
    </ligand>
</feature>
<feature type="binding site" evidence="1">
    <location>
        <begin position="356"/>
        <end position="359"/>
    </location>
    <ligand>
        <name>ATP</name>
        <dbReference type="ChEBI" id="CHEBI:30616"/>
    </ligand>
</feature>
<feature type="binding site" evidence="1">
    <location>
        <position position="392"/>
    </location>
    <ligand>
        <name>L-serine</name>
        <dbReference type="ChEBI" id="CHEBI:33384"/>
    </ligand>
</feature>
<organism>
    <name type="scientific">Synechocystis sp. (strain ATCC 27184 / PCC 6803 / Kazusa)</name>
    <dbReference type="NCBI Taxonomy" id="1111708"/>
    <lineage>
        <taxon>Bacteria</taxon>
        <taxon>Bacillati</taxon>
        <taxon>Cyanobacteriota</taxon>
        <taxon>Cyanophyceae</taxon>
        <taxon>Synechococcales</taxon>
        <taxon>Merismopediaceae</taxon>
        <taxon>Synechocystis</taxon>
    </lineage>
</organism>
<protein>
    <recommendedName>
        <fullName evidence="1">Serine--tRNA ligase</fullName>
        <ecNumber evidence="1">6.1.1.11</ecNumber>
    </recommendedName>
    <alternativeName>
        <fullName evidence="1">Seryl-tRNA synthetase</fullName>
        <shortName evidence="1">SerRS</shortName>
    </alternativeName>
    <alternativeName>
        <fullName evidence="1">Seryl-tRNA(Ser/Sec) synthetase</fullName>
    </alternativeName>
</protein>
<sequence length="430" mass="48038">MLDLKQIRENPTAIQNRLNQRGGGASYDLEPILAIAAEQKAKESERTVLQSRSNEIGKLIGQKIGQGADPKGEEIQTLREEGNSLKIQLADLEPQEKDLKEQLQKLLLELPNLPCETTPIGASEADNIEVKRWGDQYLKAETVGILPHWEIGEKLGIIDSERGVKVAQSRFISLMKAGAALERALINFMLERHIGVGYQEIMPPILVNSDSLLGTGQLPKFAEESFQCRGDDLWLIPTAEVPVTNLYRDEVLDLEQLPIKHCAYTPCFRREAGSYGRDTKGLIRLHQFNKVELVKLVKPEESAAEHQALVADAEAILQALELPYRVVELCTGDLGFGAAKCYDLEVWLPSANTYREISSCSNFHDFQARRANIRYKEKGKKGTQFVHTLNGSGLAIGRTMAAILENYYEPSSGQVKVPVVLQDFLKRDYL</sequence>